<gene>
    <name type="ordered locus">alr2800</name>
</gene>
<name>Y2800_NOSS1</name>
<proteinExistence type="predicted"/>
<organism>
    <name type="scientific">Nostoc sp. (strain PCC 7120 / SAG 25.82 / UTEX 2576)</name>
    <dbReference type="NCBI Taxonomy" id="103690"/>
    <lineage>
        <taxon>Bacteria</taxon>
        <taxon>Bacillati</taxon>
        <taxon>Cyanobacteriota</taxon>
        <taxon>Cyanophyceae</taxon>
        <taxon>Nostocales</taxon>
        <taxon>Nostocaceae</taxon>
        <taxon>Nostoc</taxon>
    </lineage>
</organism>
<protein>
    <recommendedName>
        <fullName>Uncharacterized WD repeat-containing protein alr2800</fullName>
    </recommendedName>
</protein>
<keyword id="KW-1185">Reference proteome</keyword>
<keyword id="KW-0677">Repeat</keyword>
<keyword id="KW-0853">WD repeat</keyword>
<evidence type="ECO:0000256" key="1">
    <source>
        <dbReference type="SAM" id="MobiDB-lite"/>
    </source>
</evidence>
<feature type="chain" id="PRO_0000051514" description="Uncharacterized WD repeat-containing protein alr2800">
    <location>
        <begin position="1"/>
        <end position="1258"/>
    </location>
</feature>
<feature type="repeat" description="WD 1">
    <location>
        <begin position="55"/>
        <end position="93"/>
    </location>
</feature>
<feature type="repeat" description="WD 2">
    <location>
        <begin position="640"/>
        <end position="679"/>
    </location>
</feature>
<feature type="repeat" description="WD 3">
    <location>
        <begin position="682"/>
        <end position="721"/>
    </location>
</feature>
<feature type="repeat" description="WD 4">
    <location>
        <begin position="724"/>
        <end position="763"/>
    </location>
</feature>
<feature type="repeat" description="WD 5">
    <location>
        <begin position="766"/>
        <end position="807"/>
    </location>
</feature>
<feature type="repeat" description="WD 6">
    <location>
        <begin position="809"/>
        <end position="849"/>
    </location>
</feature>
<feature type="repeat" description="WD 7">
    <location>
        <begin position="850"/>
        <end position="889"/>
    </location>
</feature>
<feature type="repeat" description="WD 8">
    <location>
        <begin position="892"/>
        <end position="931"/>
    </location>
</feature>
<feature type="repeat" description="WD 9">
    <location>
        <begin position="934"/>
        <end position="975"/>
    </location>
</feature>
<feature type="repeat" description="WD 10">
    <location>
        <begin position="976"/>
        <end position="1017"/>
    </location>
</feature>
<feature type="repeat" description="WD 11">
    <location>
        <begin position="1019"/>
        <end position="1059"/>
    </location>
</feature>
<feature type="repeat" description="WD 12">
    <location>
        <begin position="1060"/>
        <end position="1101"/>
    </location>
</feature>
<feature type="repeat" description="WD 13">
    <location>
        <begin position="1103"/>
        <end position="1143"/>
    </location>
</feature>
<feature type="repeat" description="WD 14">
    <location>
        <begin position="1144"/>
        <end position="1183"/>
    </location>
</feature>
<feature type="repeat" description="WD 15">
    <location>
        <begin position="1186"/>
        <end position="1227"/>
    </location>
</feature>
<feature type="region of interest" description="Disordered" evidence="1">
    <location>
        <begin position="112"/>
        <end position="138"/>
    </location>
</feature>
<feature type="compositionally biased region" description="Basic and acidic residues" evidence="1">
    <location>
        <begin position="112"/>
        <end position="128"/>
    </location>
</feature>
<accession>Q8YTC2</accession>
<reference key="1">
    <citation type="journal article" date="2001" name="DNA Res.">
        <title>Complete genomic sequence of the filamentous nitrogen-fixing cyanobacterium Anabaena sp. strain PCC 7120.</title>
        <authorList>
            <person name="Kaneko T."/>
            <person name="Nakamura Y."/>
            <person name="Wolk C.P."/>
            <person name="Kuritz T."/>
            <person name="Sasamoto S."/>
            <person name="Watanabe A."/>
            <person name="Iriguchi M."/>
            <person name="Ishikawa A."/>
            <person name="Kawashima K."/>
            <person name="Kimura T."/>
            <person name="Kishida Y."/>
            <person name="Kohara M."/>
            <person name="Matsumoto M."/>
            <person name="Matsuno A."/>
            <person name="Muraki A."/>
            <person name="Nakazaki N."/>
            <person name="Shimpo S."/>
            <person name="Sugimoto M."/>
            <person name="Takazawa M."/>
            <person name="Yamada M."/>
            <person name="Yasuda M."/>
            <person name="Tabata S."/>
        </authorList>
    </citation>
    <scope>NUCLEOTIDE SEQUENCE [LARGE SCALE GENOMIC DNA]</scope>
    <source>
        <strain>PCC 7120 / SAG 25.82 / UTEX 2576</strain>
    </source>
</reference>
<dbReference type="EMBL" id="BA000019">
    <property type="protein sequence ID" value="BAB74499.1"/>
    <property type="molecule type" value="Genomic_DNA"/>
</dbReference>
<dbReference type="PIR" id="AI2155">
    <property type="entry name" value="AI2155"/>
</dbReference>
<dbReference type="SMR" id="Q8YTC2"/>
<dbReference type="STRING" id="103690.gene:10494834"/>
<dbReference type="KEGG" id="ana:alr2800"/>
<dbReference type="eggNOG" id="COG2319">
    <property type="taxonomic scope" value="Bacteria"/>
</dbReference>
<dbReference type="eggNOG" id="COG3903">
    <property type="taxonomic scope" value="Bacteria"/>
</dbReference>
<dbReference type="OrthoDB" id="567898at2"/>
<dbReference type="Proteomes" id="UP000002483">
    <property type="component" value="Chromosome"/>
</dbReference>
<dbReference type="GO" id="GO:0043531">
    <property type="term" value="F:ADP binding"/>
    <property type="evidence" value="ECO:0007669"/>
    <property type="project" value="InterPro"/>
</dbReference>
<dbReference type="CDD" id="cd00093">
    <property type="entry name" value="HTH_XRE"/>
    <property type="match status" value="1"/>
</dbReference>
<dbReference type="CDD" id="cd00200">
    <property type="entry name" value="WD40"/>
    <property type="match status" value="2"/>
</dbReference>
<dbReference type="FunFam" id="2.130.10.10:FF:000228">
    <property type="entry name" value="COMPASS-like H3K4 histone methylase component WDR5A"/>
    <property type="match status" value="2"/>
</dbReference>
<dbReference type="Gene3D" id="3.40.50.300">
    <property type="entry name" value="P-loop containing nucleotide triphosphate hydrolases"/>
    <property type="match status" value="1"/>
</dbReference>
<dbReference type="Gene3D" id="2.130.10.10">
    <property type="entry name" value="YVTN repeat-like/Quinoprotein amine dehydrogenase"/>
    <property type="match status" value="7"/>
</dbReference>
<dbReference type="InterPro" id="IPR001387">
    <property type="entry name" value="Cro/C1-type_HTH"/>
</dbReference>
<dbReference type="InterPro" id="IPR020472">
    <property type="entry name" value="G-protein_beta_WD-40_rep"/>
</dbReference>
<dbReference type="InterPro" id="IPR002182">
    <property type="entry name" value="NB-ARC"/>
</dbReference>
<dbReference type="InterPro" id="IPR027417">
    <property type="entry name" value="P-loop_NTPase"/>
</dbReference>
<dbReference type="InterPro" id="IPR015943">
    <property type="entry name" value="WD40/YVTN_repeat-like_dom_sf"/>
</dbReference>
<dbReference type="InterPro" id="IPR019775">
    <property type="entry name" value="WD40_repeat_CS"/>
</dbReference>
<dbReference type="InterPro" id="IPR036322">
    <property type="entry name" value="WD40_repeat_dom_sf"/>
</dbReference>
<dbReference type="InterPro" id="IPR001680">
    <property type="entry name" value="WD40_rpt"/>
</dbReference>
<dbReference type="PANTHER" id="PTHR22847:SF637">
    <property type="entry name" value="WD REPEAT DOMAIN 5B"/>
    <property type="match status" value="1"/>
</dbReference>
<dbReference type="PANTHER" id="PTHR22847">
    <property type="entry name" value="WD40 REPEAT PROTEIN"/>
    <property type="match status" value="1"/>
</dbReference>
<dbReference type="Pfam" id="PF25173">
    <property type="entry name" value="Beta-prop_WDR3_1st"/>
    <property type="match status" value="1"/>
</dbReference>
<dbReference type="Pfam" id="PF00931">
    <property type="entry name" value="NB-ARC"/>
    <property type="match status" value="1"/>
</dbReference>
<dbReference type="Pfam" id="PF00400">
    <property type="entry name" value="WD40"/>
    <property type="match status" value="9"/>
</dbReference>
<dbReference type="PRINTS" id="PR00364">
    <property type="entry name" value="DISEASERSIST"/>
</dbReference>
<dbReference type="PRINTS" id="PR00320">
    <property type="entry name" value="GPROTEINBRPT"/>
</dbReference>
<dbReference type="SMART" id="SM00320">
    <property type="entry name" value="WD40"/>
    <property type="match status" value="14"/>
</dbReference>
<dbReference type="SUPFAM" id="SSF52540">
    <property type="entry name" value="P-loop containing nucleoside triphosphate hydrolases"/>
    <property type="match status" value="1"/>
</dbReference>
<dbReference type="SUPFAM" id="SSF141571">
    <property type="entry name" value="Pentapeptide repeat-like"/>
    <property type="match status" value="1"/>
</dbReference>
<dbReference type="SUPFAM" id="SSF50978">
    <property type="entry name" value="WD40 repeat-like"/>
    <property type="match status" value="2"/>
</dbReference>
<dbReference type="PROSITE" id="PS00678">
    <property type="entry name" value="WD_REPEATS_1"/>
    <property type="match status" value="9"/>
</dbReference>
<dbReference type="PROSITE" id="PS50082">
    <property type="entry name" value="WD_REPEATS_2"/>
    <property type="match status" value="14"/>
</dbReference>
<dbReference type="PROSITE" id="PS50294">
    <property type="entry name" value="WD_REPEATS_REGION"/>
    <property type="match status" value="1"/>
</dbReference>
<sequence length="1258" mass="139514">MILQSTSLFCKYINNCRYINREIVATLKASPQGLARIKQARSDRGWSVDDFRWLELASEILGVCWQENGVLAAGISEGTWKRFLAGKQAINAEAFKAYCQVLGLNWEEVQEGGRTKERKDTGTSRQEKFLSSSHPHTDWGEAPDVSIFYGRSEELDTVKRWVTQENCRLITLLGMGGIGKTTLSVKLAQEIINSEKIYLSQSPEYIIWRSLRNAPPVEDILAELIQFLSGQQETNLSNHLQGRISLLLKNLRSSRCLIILDNAESILQAGDRNGRYRAGCEGYGQFLQCIAETSHQSCLILTSREKPQGLAKYEGDSLPVRSLPLTGLQEQEGRELFNVKGKFAASCDQWQVLISRYGGNPLALKIVASSIRDFFDGDVSQFLEVSQQGTFIFDDIRDLLDQQFQRLTTLEREIMYWLAINREPVTLAELQADFVANIPPRELLESLSSLQRRSLIEKSAGGFTQQPVVMEYVSNHLIEQVCEEMREWGLVRSRGAEEQRSRGEKIHTQYKLNAALPLTALSTPLFTTHALIKAQAKDYVRESQISLILQPLINQLITEFGSLENISNCLVHILSRLRGKSPQETGYAGGNVLNLLHHAQVDLSGYDFSGLTVWQAYLQGVNLHDVDFANSDLSCCVFTETLGNILSAAFSPEGQLLATCDTDCHVRVWEVKSGKLLLICRGHSNWVRFVVFSPDGEILASCGADENVKLWSVRDGVCIKTLTGHEHEVFSVAFHPDGETLASASGDKTIKLWDIQDGTCLQTLTGHTDWVRCVAFSPDGNTLASSAADHTIKLWDVSQGKCLRTLKSHTGWVRSVAFSADGQTLASGSGDRTIKIWNYHTGECLKTYIGHTNSVYSIAYSPDSKILVSGSGDRTIKLWDCQTHICIKTLHGHTNEVCSVAFSPDGQTLACVSLDQSVRLWNCRTGQCLKAWYGNTDWALPVAFSPDRQILASGSNDKTVKLWDWQTGKYISSLEGHTDFIYGIAFSPDSQTLASASTDSSVRLWNISTGQCFQILLEHTDWVYAVVFHPQGKIIATGSADCTVKLWNISTGQCLKTLSEHSDKILGMAWSPDGQLLASASADQSVRLWDCCTGRCVGILRGHSNRVYSAIFSPNGEIIATCSTDQTVKIWDWQQGKCLKTLTGHTNWVFDIAFSPDGKILASASHDQTVRIWDVNTGKCHHICIGHTHLVSSVAFSPDGEVVASGSQDQTVRIWNVKTGECLQILRAKRLYEGMNITGVTGLTKATIFTLQALGALR</sequence>